<name>SPIKE_PEDV7</name>
<accession>Q91AV1</accession>
<organism>
    <name type="scientific">Porcine epidemic diarrhea virus (strain CV777)</name>
    <name type="common">PEDV</name>
    <dbReference type="NCBI Taxonomy" id="229032"/>
    <lineage>
        <taxon>Viruses</taxon>
        <taxon>Riboviria</taxon>
        <taxon>Orthornavirae</taxon>
        <taxon>Pisuviricota</taxon>
        <taxon>Pisoniviricetes</taxon>
        <taxon>Nidovirales</taxon>
        <taxon>Cornidovirineae</taxon>
        <taxon>Coronaviridae</taxon>
        <taxon>Orthocoronavirinae</taxon>
        <taxon>Alphacoronavirus</taxon>
        <taxon>Pedacovirus</taxon>
        <taxon>Porcine epidemic diarrhea virus</taxon>
    </lineage>
</organism>
<feature type="signal peptide" evidence="1">
    <location>
        <begin position="1"/>
        <end position="25"/>
    </location>
</feature>
<feature type="chain" id="PRO_0000283925" description="Spike glycoprotein" evidence="1">
    <location>
        <begin position="26"/>
        <end position="1383"/>
    </location>
</feature>
<feature type="topological domain" description="Virion surface" evidence="1">
    <location>
        <begin position="26"/>
        <end position="1324"/>
    </location>
</feature>
<feature type="transmembrane region" description="Helical" evidence="1">
    <location>
        <begin position="1325"/>
        <end position="1344"/>
    </location>
</feature>
<feature type="topological domain" description="Intravirion" evidence="1">
    <location>
        <begin position="1345"/>
        <end position="1383"/>
    </location>
</feature>
<feature type="region of interest" description="S1" evidence="1">
    <location>
        <begin position="26"/>
        <end position="734"/>
    </location>
</feature>
<feature type="region of interest" description="Interaction with host ANPEP" evidence="1">
    <location>
        <begin position="617"/>
        <end position="745"/>
    </location>
</feature>
<feature type="region of interest" description="S2" evidence="1">
    <location>
        <begin position="735"/>
        <end position="1383"/>
    </location>
</feature>
<feature type="region of interest" description="Fusion peptide" evidence="1">
    <location>
        <begin position="955"/>
        <end position="975"/>
    </location>
</feature>
<feature type="region of interest" description="Heptad repeat 1 (HR1)" evidence="2">
    <location>
        <begin position="969"/>
        <end position="1088"/>
    </location>
</feature>
<feature type="region of interest" description="Heptad repeat 2 (HR2)" evidence="3">
    <location>
        <begin position="1240"/>
        <end position="1336"/>
    </location>
</feature>
<feature type="coiled-coil region" evidence="1">
    <location>
        <begin position="1036"/>
        <end position="1080"/>
    </location>
</feature>
<feature type="coiled-coil region" evidence="1">
    <location>
        <begin position="1272"/>
        <end position="1314"/>
    </location>
</feature>
<feature type="short sequence motif" description="KxHxx" evidence="1">
    <location>
        <begin position="1379"/>
        <end position="1383"/>
    </location>
</feature>
<feature type="strand" evidence="4">
    <location>
        <begin position="46"/>
        <end position="52"/>
    </location>
</feature>
<feature type="strand" evidence="4">
    <location>
        <begin position="75"/>
        <end position="77"/>
    </location>
</feature>
<feature type="strand" evidence="4">
    <location>
        <begin position="162"/>
        <end position="166"/>
    </location>
</feature>
<feature type="strand" evidence="4">
    <location>
        <begin position="169"/>
        <end position="181"/>
    </location>
</feature>
<feature type="strand" evidence="4">
    <location>
        <begin position="202"/>
        <end position="204"/>
    </location>
</feature>
<feature type="strand" evidence="4">
    <location>
        <begin position="208"/>
        <end position="213"/>
    </location>
</feature>
<feature type="strand" evidence="4">
    <location>
        <begin position="223"/>
        <end position="227"/>
    </location>
</feature>
<feature type="helix" evidence="4">
    <location>
        <begin position="232"/>
        <end position="234"/>
    </location>
</feature>
<feature type="helix" evidence="4">
    <location>
        <begin position="243"/>
        <end position="245"/>
    </location>
</feature>
<feature type="strand" evidence="4">
    <location>
        <begin position="260"/>
        <end position="262"/>
    </location>
</feature>
<feature type="strand" evidence="4">
    <location>
        <begin position="267"/>
        <end position="285"/>
    </location>
</feature>
<feature type="strand" evidence="4">
    <location>
        <begin position="291"/>
        <end position="298"/>
    </location>
</feature>
<feature type="strand" evidence="4">
    <location>
        <begin position="314"/>
        <end position="319"/>
    </location>
</feature>
<feature type="helix" evidence="4">
    <location>
        <begin position="323"/>
        <end position="325"/>
    </location>
</feature>
<feature type="strand" evidence="4">
    <location>
        <begin position="331"/>
        <end position="336"/>
    </location>
</feature>
<feature type="strand" evidence="4">
    <location>
        <begin position="341"/>
        <end position="351"/>
    </location>
</feature>
<feature type="strand" evidence="4">
    <location>
        <begin position="368"/>
        <end position="376"/>
    </location>
</feature>
<feature type="strand" evidence="4">
    <location>
        <begin position="379"/>
        <end position="388"/>
    </location>
</feature>
<feature type="strand" evidence="4">
    <location>
        <begin position="394"/>
        <end position="398"/>
    </location>
</feature>
<feature type="strand" evidence="4">
    <location>
        <begin position="403"/>
        <end position="405"/>
    </location>
</feature>
<feature type="strand" evidence="4">
    <location>
        <begin position="408"/>
        <end position="411"/>
    </location>
</feature>
<feature type="strand" evidence="4">
    <location>
        <begin position="416"/>
        <end position="422"/>
    </location>
</feature>
<feature type="strand" evidence="4">
    <location>
        <begin position="434"/>
        <end position="451"/>
    </location>
</feature>
<feature type="strand" evidence="4">
    <location>
        <begin position="454"/>
        <end position="460"/>
    </location>
</feature>
<feature type="helix" evidence="4">
    <location>
        <begin position="464"/>
        <end position="469"/>
    </location>
</feature>
<feature type="turn" evidence="4">
    <location>
        <begin position="470"/>
        <end position="473"/>
    </location>
</feature>
<feature type="strand" evidence="4">
    <location>
        <begin position="479"/>
        <end position="485"/>
    </location>
</feature>
<feature type="turn" evidence="4">
    <location>
        <begin position="491"/>
        <end position="493"/>
    </location>
</feature>
<feature type="strand" evidence="4">
    <location>
        <begin position="496"/>
        <end position="499"/>
    </location>
</feature>
<feature type="strand" evidence="4">
    <location>
        <begin position="507"/>
        <end position="519"/>
    </location>
</feature>
<feature type="strand" evidence="4">
    <location>
        <begin position="521"/>
        <end position="523"/>
    </location>
</feature>
<feature type="strand" evidence="4">
    <location>
        <begin position="525"/>
        <end position="533"/>
    </location>
</feature>
<feature type="strand" evidence="4">
    <location>
        <begin position="536"/>
        <end position="540"/>
    </location>
</feature>
<feature type="strand" evidence="4">
    <location>
        <begin position="543"/>
        <end position="554"/>
    </location>
</feature>
<feature type="strand" evidence="4">
    <location>
        <begin position="562"/>
        <end position="570"/>
    </location>
</feature>
<feature type="helix" evidence="4">
    <location>
        <begin position="573"/>
        <end position="576"/>
    </location>
</feature>
<feature type="turn" evidence="4">
    <location>
        <begin position="577"/>
        <end position="579"/>
    </location>
</feature>
<feature type="strand" evidence="4">
    <location>
        <begin position="581"/>
        <end position="590"/>
    </location>
</feature>
<feature type="strand" evidence="4">
    <location>
        <begin position="596"/>
        <end position="608"/>
    </location>
</feature>
<feature type="strand" evidence="4">
    <location>
        <begin position="610"/>
        <end position="627"/>
    </location>
</feature>
<feature type="strand" evidence="4">
    <location>
        <begin position="647"/>
        <end position="651"/>
    </location>
</feature>
<feature type="strand" evidence="4">
    <location>
        <begin position="654"/>
        <end position="664"/>
    </location>
</feature>
<feature type="strand" evidence="4">
    <location>
        <begin position="671"/>
        <end position="674"/>
    </location>
</feature>
<feature type="strand" evidence="4">
    <location>
        <begin position="680"/>
        <end position="684"/>
    </location>
</feature>
<feature type="turn" evidence="4">
    <location>
        <begin position="686"/>
        <end position="688"/>
    </location>
</feature>
<feature type="strand" evidence="4">
    <location>
        <begin position="691"/>
        <end position="695"/>
    </location>
</feature>
<feature type="strand" evidence="4">
    <location>
        <begin position="700"/>
        <end position="706"/>
    </location>
</feature>
<feature type="strand" evidence="4">
    <location>
        <begin position="709"/>
        <end position="716"/>
    </location>
</feature>
<feature type="strand" evidence="4">
    <location>
        <begin position="721"/>
        <end position="727"/>
    </location>
</feature>
<feature type="strand" evidence="4">
    <location>
        <begin position="732"/>
        <end position="736"/>
    </location>
</feature>
<feature type="strand" evidence="4">
    <location>
        <begin position="742"/>
        <end position="748"/>
    </location>
</feature>
<feature type="strand" evidence="4">
    <location>
        <begin position="751"/>
        <end position="754"/>
    </location>
</feature>
<feature type="strand" evidence="4">
    <location>
        <begin position="759"/>
        <end position="761"/>
    </location>
</feature>
<feature type="strand" evidence="4">
    <location>
        <begin position="775"/>
        <end position="782"/>
    </location>
</feature>
<feature type="strand" evidence="4">
    <location>
        <begin position="784"/>
        <end position="795"/>
    </location>
</feature>
<feature type="strand" evidence="4">
    <location>
        <begin position="801"/>
        <end position="803"/>
    </location>
</feature>
<feature type="helix" evidence="4">
    <location>
        <begin position="805"/>
        <end position="810"/>
    </location>
</feature>
<feature type="helix" evidence="4">
    <location>
        <begin position="814"/>
        <end position="820"/>
    </location>
</feature>
<feature type="turn" evidence="4">
    <location>
        <begin position="824"/>
        <end position="827"/>
    </location>
</feature>
<feature type="helix" evidence="4">
    <location>
        <begin position="828"/>
        <end position="848"/>
    </location>
</feature>
<feature type="helix" evidence="4">
    <location>
        <begin position="853"/>
        <end position="859"/>
    </location>
</feature>
<feature type="helix" evidence="4">
    <location>
        <begin position="872"/>
        <end position="875"/>
    </location>
</feature>
<feature type="helix" evidence="4">
    <location>
        <begin position="893"/>
        <end position="902"/>
    </location>
</feature>
<feature type="turn" evidence="4">
    <location>
        <begin position="914"/>
        <end position="918"/>
    </location>
</feature>
<feature type="helix" evidence="4">
    <location>
        <begin position="926"/>
        <end position="932"/>
    </location>
</feature>
<feature type="strand" evidence="4">
    <location>
        <begin position="935"/>
        <end position="937"/>
    </location>
</feature>
<feature type="helix" evidence="4">
    <location>
        <begin position="944"/>
        <end position="956"/>
    </location>
</feature>
<feature type="turn" evidence="4">
    <location>
        <begin position="957"/>
        <end position="959"/>
    </location>
</feature>
<feature type="helix" evidence="4">
    <location>
        <begin position="971"/>
        <end position="980"/>
    </location>
</feature>
<feature type="turn" evidence="4">
    <location>
        <begin position="989"/>
        <end position="993"/>
    </location>
</feature>
<feature type="helix" evidence="4">
    <location>
        <begin position="994"/>
        <end position="1010"/>
    </location>
</feature>
<feature type="helix" evidence="4">
    <location>
        <begin position="1015"/>
        <end position="1017"/>
    </location>
</feature>
<feature type="helix" evidence="4">
    <location>
        <begin position="1020"/>
        <end position="1023"/>
    </location>
</feature>
<feature type="helix" evidence="4">
    <location>
        <begin position="1028"/>
        <end position="1039"/>
    </location>
</feature>
<feature type="helix" evidence="4">
    <location>
        <begin position="1041"/>
        <end position="1043"/>
    </location>
</feature>
<feature type="helix" evidence="4">
    <location>
        <begin position="1044"/>
        <end position="1051"/>
    </location>
</feature>
<feature type="helix" evidence="4">
    <location>
        <begin position="1052"/>
        <end position="1054"/>
    </location>
</feature>
<feature type="helix" evidence="4">
    <location>
        <begin position="1064"/>
        <end position="1067"/>
    </location>
</feature>
<feature type="turn" evidence="4">
    <location>
        <begin position="1068"/>
        <end position="1070"/>
    </location>
</feature>
<feature type="helix" evidence="4">
    <location>
        <begin position="1073"/>
        <end position="1119"/>
    </location>
</feature>
<feature type="turn" evidence="4">
    <location>
        <begin position="1127"/>
        <end position="1131"/>
    </location>
</feature>
<feature type="strand" evidence="4">
    <location>
        <begin position="1132"/>
        <end position="1144"/>
    </location>
</feature>
<feature type="strand" evidence="4">
    <location>
        <begin position="1147"/>
        <end position="1158"/>
    </location>
</feature>
<feature type="strand" evidence="4">
    <location>
        <begin position="1160"/>
        <end position="1165"/>
    </location>
</feature>
<feature type="strand" evidence="4">
    <location>
        <begin position="1169"/>
        <end position="1171"/>
    </location>
</feature>
<feature type="turn" evidence="4">
    <location>
        <begin position="1172"/>
        <end position="1174"/>
    </location>
</feature>
<feature type="strand" evidence="4">
    <location>
        <begin position="1175"/>
        <end position="1180"/>
    </location>
</feature>
<feature type="strand" evidence="4">
    <location>
        <begin position="1184"/>
        <end position="1189"/>
    </location>
</feature>
<feature type="strand" evidence="4">
    <location>
        <begin position="1193"/>
        <end position="1195"/>
    </location>
</feature>
<feature type="strand" evidence="4">
    <location>
        <begin position="1200"/>
        <end position="1206"/>
    </location>
</feature>
<feature type="strand" evidence="4">
    <location>
        <begin position="1216"/>
        <end position="1222"/>
    </location>
</feature>
<feature type="strand" evidence="4">
    <location>
        <begin position="1227"/>
        <end position="1230"/>
    </location>
</feature>
<feature type="turn" evidence="4">
    <location>
        <begin position="1232"/>
        <end position="1234"/>
    </location>
</feature>
<feature type="helix" evidence="4">
    <location>
        <begin position="1235"/>
        <end position="1238"/>
    </location>
</feature>
<evidence type="ECO:0000255" key="1">
    <source>
        <dbReference type="HAMAP-Rule" id="MF_04200"/>
    </source>
</evidence>
<evidence type="ECO:0000255" key="2">
    <source>
        <dbReference type="PROSITE-ProRule" id="PRU01271"/>
    </source>
</evidence>
<evidence type="ECO:0000255" key="3">
    <source>
        <dbReference type="PROSITE-ProRule" id="PRU01272"/>
    </source>
</evidence>
<evidence type="ECO:0007829" key="4">
    <source>
        <dbReference type="PDB" id="6U7K"/>
    </source>
</evidence>
<gene>
    <name evidence="1" type="primary">S</name>
    <name type="ORF">2</name>
</gene>
<protein>
    <recommendedName>
        <fullName evidence="1">Spike glycoprotein</fullName>
        <shortName evidence="1">S glycoprotein</shortName>
    </recommendedName>
    <alternativeName>
        <fullName evidence="1">E2</fullName>
    </alternativeName>
    <alternativeName>
        <fullName evidence="1">Peplomer protein</fullName>
    </alternativeName>
</protein>
<comment type="function">
    <text evidence="1">S1 region attaches the virion to the cell membrane by interacting with host ANPEP/aminopeptidase N, initiating the infection. Binding to the receptor probably induces conformational changes in the S glycoprotein unmasking the fusion peptide of S2 region and activating membranes fusion. S2 region belongs to the class I viral fusion protein. Under the current model, the protein has at least 3 conformational states: pre-fusion native state, pre-hairpin intermediate state, and post-fusion hairpin state. During viral and target cell membrane fusion, the coiled coil regions (heptad repeats) regions assume a trimer-of-hairpins structure, positioning the fusion peptide in close proximity to the C-terminal region of the ectodomain. The formation of this structure appears to drive apposition and subsequent fusion of viral and target cell membranes.</text>
</comment>
<comment type="subunit">
    <text evidence="1">Homotrimer. During virus morphogenesis, found in a complex with M and HE proteins. Interacts with host ANPEP.</text>
</comment>
<comment type="subcellular location">
    <subcellularLocation>
        <location evidence="1">Virion membrane</location>
        <topology evidence="1">Single-pass type I membrane protein</topology>
    </subcellularLocation>
    <subcellularLocation>
        <location evidence="1">Host endoplasmic reticulum-Golgi intermediate compartment membrane</location>
        <topology evidence="1">Single-pass type I membrane protein</topology>
    </subcellularLocation>
    <text evidence="1">Accumulates in the endoplasmic reticulum-Golgi intermediate compartment, where it participates in virus particle assembly.</text>
</comment>
<comment type="domain">
    <text evidence="1">The KxHxx motif seems to function as an ER retrieval signal.</text>
</comment>
<comment type="similarity">
    <text evidence="1">Belongs to the alphacoronaviruses spike protein family.</text>
</comment>
<comment type="caution">
    <text evidence="1">In contrast to beta- and gammacoronaviruses, S glycoprotein is not cleaved into S1 and S2.</text>
</comment>
<sequence>MRSLIYFWLLLPVLPTLSLPQDVTRCQSTTNFRRFFSKFNVQAPAVVVLGGYLPSMNSSSWYCGTGIETASGVHGIFLSYIDSGQGFEIGISQEPFDPSGYQLYLHKATNGNTNAIARLRICQFPDNKTLGPTVNDVTTGRNCLFNKAIPAYMRDGKDIVVGITWDNDRVTVFADKIYHFYLKNDWSRVATRCYNRRSCAMQYVYTPTYYMLNVTSAGEDGIYYEPCTANCTGYAANVFATDSNGHIPEGFSFNNWFLLSNDSTLLHGKVVSNQPLLVNCLLAIPKIYGLGQFFSFNHTMDGVCNGAAVDRAPEALRFNINDTSVILAEGSIVLHTALGTNLSFVCSNSSDPHLAIFAIPLGATEVPYYCFLKVDTYNSTVYKFLAVLPPTVREIVITKYGDVYVNGFGYLHLGLLDAVTINFTGHGTDDDVSGFWTIASTNFVDALIEVQGTSIQRILYCDDPVSQLKCSQVAFDLDDGFYPISSRNLLSHEQPISFVTLPSFNDHSFVNITVSAAFGGLSSANLVASDTTINGFSSFCVDTRQFTITLFYNVTNSYGYVSKSQDSNCPFTLQSVNDYLSFSKFCVSTSLLAGACTIDLFGYPAFGSGVKLTSLYFQFTKGELITGTPKPLEGITDVSFMTLDVCTKYTIYGFKGEGIITLTNSSILAGVYYTSDSGQLLAFKNVTSGAVYSVTPCSFSEQAAYVNDDIVGVISSLSNSTFNNTRELPGFFYHSNDGSNCTEPVLVYSNIGVCKSGSIGYVPSQYGQVKIAPTVTGNISIPTNFSMSIRTEYLQLYNTPVSVDCATYVCNGNSRCKQLLTQYTAACKTIESALQLSARLESVEVNSMLTISEEALQLATISSFNGDGYNFTNVLGASVYDPASGRVVQKRSVIEDLLFNKVVTNGLGTVDEDYKRCSNGRSVADLVCAQYYSGVMVLPGVVDAEKLHMYSASLIGGMALGGITAAAALPFSYAVQARLNYLALQTDVLQRNQQLLAESFNSAIGNITSAFESVKEAISQTSKGLNTVAHALTKVQEVVNSQGSALNQLTVQLQHNFQAISSSIDDIYSRLDILSADVQVDRLITGRLSALNAFVAQTLTKYTEVQASRKLAQQKVNECVKSQSQRYGFCGGDGEHIFSLVQAAPQGLLFLHTVLVPGDFVNVLAIAGLCVNGEIALTLREPGLVLFTHELQTYTATEYFVSSRRMFEPRKPTVSDFVQIESCVVTYVNLTSDQLPDVIPDYIDVNKTLDEILASLPNRTGPSLPLDVFNATYLNLTGEIADLEQRSESLRNTTEELRSLINNINNTLVDLEWLNRVETYIKWPWWVWLIIVIVLIFVVSLLVFCCISTGCCGCCGCCGACFSGCCRGPRLQPYEAFEKVHVQ</sequence>
<reference key="1">
    <citation type="journal article" date="1994" name="Virology">
        <title>Sequence analysis of the porcine epidemic diarrhea virus genome between the nucleocapsid and spike protein genes reveals a polymorphic ORF.</title>
        <authorList>
            <person name="Duarte M."/>
            <person name="Tobler K."/>
            <person name="Bridgen A."/>
            <person name="Rasschaert D."/>
            <person name="Ackermann M."/>
            <person name="Laude H."/>
        </authorList>
    </citation>
    <scope>NUCLEOTIDE SEQUENCE [GENOMIC RNA]</scope>
</reference>
<reference key="2">
    <citation type="journal article" date="1998" name="Adv. Exp. Med. Biol.">
        <title>Further analysis of the genome of porcine epidemic diarrhea virus.</title>
        <authorList>
            <person name="Bridgen A."/>
            <person name="Kocherhans R."/>
            <person name="Tobler K."/>
            <person name="Carvajal A."/>
            <person name="Ackermann M."/>
        </authorList>
    </citation>
    <scope>NUCLEOTIDE SEQUENCE [GENOMIC RNA]</scope>
</reference>
<reference key="3">
    <citation type="journal article" date="2001" name="Virus Genes">
        <title>Completion of the porcine epidemic diarrhoea coronavirus (PEDV) genome sequence.</title>
        <authorList>
            <person name="Kocherhans R."/>
            <person name="Bridgen A."/>
            <person name="Ackermann M."/>
            <person name="Tobler K."/>
        </authorList>
    </citation>
    <scope>NUCLEOTIDE SEQUENCE [GENOMIC RNA]</scope>
</reference>
<organismHost>
    <name type="scientific">Sus scrofa</name>
    <name type="common">Pig</name>
    <dbReference type="NCBI Taxonomy" id="9823"/>
</organismHost>
<dbReference type="EMBL" id="AF353511">
    <property type="protein sequence ID" value="AAK38656.1"/>
    <property type="molecule type" value="Genomic_RNA"/>
</dbReference>
<dbReference type="RefSeq" id="NP_598310.1">
    <property type="nucleotide sequence ID" value="NC_003436.1"/>
</dbReference>
<dbReference type="PDB" id="4J79">
    <property type="method" value="X-ray"/>
    <property type="resolution" value="1.56 A"/>
    <property type="chains" value="B=1378-1383"/>
</dbReference>
<dbReference type="PDB" id="6U7K">
    <property type="method" value="EM"/>
    <property type="resolution" value="3.14 A"/>
    <property type="chains" value="A/B/C=1-1319"/>
</dbReference>
<dbReference type="PDBsum" id="4J79"/>
<dbReference type="PDBsum" id="6U7K"/>
<dbReference type="EMDB" id="EMD-20672"/>
<dbReference type="SMR" id="Q91AV1"/>
<dbReference type="IntAct" id="Q91AV1">
    <property type="interactions" value="3"/>
</dbReference>
<dbReference type="MINT" id="Q91AV1"/>
<dbReference type="KEGG" id="vg:935184"/>
<dbReference type="EvolutionaryTrace" id="Q91AV1"/>
<dbReference type="Proteomes" id="UP000008159">
    <property type="component" value="Segment"/>
</dbReference>
<dbReference type="GO" id="GO:0044173">
    <property type="term" value="C:host cell endoplasmic reticulum-Golgi intermediate compartment membrane"/>
    <property type="evidence" value="ECO:0007669"/>
    <property type="project" value="UniProtKB-SubCell"/>
</dbReference>
<dbReference type="GO" id="GO:0016020">
    <property type="term" value="C:membrane"/>
    <property type="evidence" value="ECO:0007669"/>
    <property type="project" value="UniProtKB-UniRule"/>
</dbReference>
<dbReference type="GO" id="GO:0019031">
    <property type="term" value="C:viral envelope"/>
    <property type="evidence" value="ECO:0007669"/>
    <property type="project" value="UniProtKB-UniRule"/>
</dbReference>
<dbReference type="GO" id="GO:0055036">
    <property type="term" value="C:virion membrane"/>
    <property type="evidence" value="ECO:0007669"/>
    <property type="project" value="UniProtKB-SubCell"/>
</dbReference>
<dbReference type="GO" id="GO:0075509">
    <property type="term" value="P:endocytosis involved in viral entry into host cell"/>
    <property type="evidence" value="ECO:0007669"/>
    <property type="project" value="UniProtKB-UniRule"/>
</dbReference>
<dbReference type="GO" id="GO:0039654">
    <property type="term" value="P:fusion of virus membrane with host endosome membrane"/>
    <property type="evidence" value="ECO:0007669"/>
    <property type="project" value="UniProtKB-UniRule"/>
</dbReference>
<dbReference type="GO" id="GO:0019064">
    <property type="term" value="P:fusion of virus membrane with host plasma membrane"/>
    <property type="evidence" value="ECO:0007669"/>
    <property type="project" value="UniProtKB-UniRule"/>
</dbReference>
<dbReference type="GO" id="GO:0046813">
    <property type="term" value="P:receptor-mediated virion attachment to host cell"/>
    <property type="evidence" value="ECO:0007669"/>
    <property type="project" value="UniProtKB-UniRule"/>
</dbReference>
<dbReference type="CDD" id="cd22376">
    <property type="entry name" value="PDEV-like_Spike_SD1-2_S1-2_S2"/>
    <property type="match status" value="1"/>
</dbReference>
<dbReference type="Gene3D" id="1.20.5.300">
    <property type="match status" value="2"/>
</dbReference>
<dbReference type="Gene3D" id="2.60.40.3130">
    <property type="match status" value="1"/>
</dbReference>
<dbReference type="HAMAP" id="MF_04200">
    <property type="entry name" value="ALPHA_CORONA_SPIKE"/>
    <property type="match status" value="1"/>
</dbReference>
<dbReference type="InterPro" id="IPR042552">
    <property type="entry name" value="ALPHA_CORONA_SPIKE"/>
</dbReference>
<dbReference type="InterPro" id="IPR043607">
    <property type="entry name" value="CoV_S1_C"/>
</dbReference>
<dbReference type="InterPro" id="IPR043473">
    <property type="entry name" value="S2_sf_CoV"/>
</dbReference>
<dbReference type="InterPro" id="IPR002551">
    <property type="entry name" value="Spike_S1_CoV"/>
</dbReference>
<dbReference type="InterPro" id="IPR002552">
    <property type="entry name" value="Spike_S2_CoV"/>
</dbReference>
<dbReference type="InterPro" id="IPR043614">
    <property type="entry name" value="Spike_S2_CoV_C"/>
</dbReference>
<dbReference type="InterPro" id="IPR044873">
    <property type="entry name" value="Spike_S2_CoV_HR1"/>
</dbReference>
<dbReference type="InterPro" id="IPR044874">
    <property type="entry name" value="Spike_S2_CoV_HR2"/>
</dbReference>
<dbReference type="Pfam" id="PF01600">
    <property type="entry name" value="CoV_S1"/>
    <property type="match status" value="1"/>
</dbReference>
<dbReference type="Pfam" id="PF19209">
    <property type="entry name" value="CoV_S1_C"/>
    <property type="match status" value="1"/>
</dbReference>
<dbReference type="Pfam" id="PF01601">
    <property type="entry name" value="CoV_S2"/>
    <property type="match status" value="1"/>
</dbReference>
<dbReference type="Pfam" id="PF19214">
    <property type="entry name" value="CoV_S2_C"/>
    <property type="match status" value="1"/>
</dbReference>
<dbReference type="SUPFAM" id="SSF111474">
    <property type="entry name" value="Coronavirus S2 glycoprotein"/>
    <property type="match status" value="2"/>
</dbReference>
<dbReference type="PROSITE" id="PS51923">
    <property type="entry name" value="COV_S2_HR1"/>
    <property type="match status" value="1"/>
</dbReference>
<dbReference type="PROSITE" id="PS51924">
    <property type="entry name" value="COV_S2_HR2"/>
    <property type="match status" value="1"/>
</dbReference>
<keyword id="KW-0002">3D-structure</keyword>
<keyword id="KW-0175">Coiled coil</keyword>
<keyword id="KW-0325">Glycoprotein</keyword>
<keyword id="KW-1043">Host membrane</keyword>
<keyword id="KW-0945">Host-virus interaction</keyword>
<keyword id="KW-0472">Membrane</keyword>
<keyword id="KW-0732">Signal</keyword>
<keyword id="KW-0812">Transmembrane</keyword>
<keyword id="KW-1133">Transmembrane helix</keyword>
<keyword id="KW-1161">Viral attachment to host cell</keyword>
<keyword id="KW-0261">Viral envelope protein</keyword>
<keyword id="KW-0946">Virion</keyword>
<keyword id="KW-0843">Virulence</keyword>
<keyword id="KW-1160">Virus entry into host cell</keyword>
<proteinExistence type="evidence at protein level"/>